<feature type="chain" id="PRO_0000098925" description="Tryptophan synthase beta chain">
    <location>
        <begin position="1"/>
        <end position="406"/>
    </location>
</feature>
<feature type="modified residue" description="N6-(pyridoxal phosphate)lysine" evidence="1">
    <location>
        <position position="99"/>
    </location>
</feature>
<reference key="1">
    <citation type="journal article" date="2002" name="Proc. Natl. Acad. Sci. U.S.A.">
        <title>The Brucella suis genome reveals fundamental similarities between animal and plant pathogens and symbionts.</title>
        <authorList>
            <person name="Paulsen I.T."/>
            <person name="Seshadri R."/>
            <person name="Nelson K.E."/>
            <person name="Eisen J.A."/>
            <person name="Heidelberg J.F."/>
            <person name="Read T.D."/>
            <person name="Dodson R.J."/>
            <person name="Umayam L.A."/>
            <person name="Brinkac L.M."/>
            <person name="Beanan M.J."/>
            <person name="Daugherty S.C."/>
            <person name="DeBoy R.T."/>
            <person name="Durkin A.S."/>
            <person name="Kolonay J.F."/>
            <person name="Madupu R."/>
            <person name="Nelson W.C."/>
            <person name="Ayodeji B."/>
            <person name="Kraul M."/>
            <person name="Shetty J."/>
            <person name="Malek J.A."/>
            <person name="Van Aken S.E."/>
            <person name="Riedmuller S."/>
            <person name="Tettelin H."/>
            <person name="Gill S.R."/>
            <person name="White O."/>
            <person name="Salzberg S.L."/>
            <person name="Hoover D.L."/>
            <person name="Lindler L.E."/>
            <person name="Halling S.M."/>
            <person name="Boyle S.M."/>
            <person name="Fraser C.M."/>
        </authorList>
    </citation>
    <scope>NUCLEOTIDE SEQUENCE [LARGE SCALE GENOMIC DNA]</scope>
    <source>
        <strain>1330</strain>
    </source>
</reference>
<reference key="2">
    <citation type="journal article" date="2011" name="J. Bacteriol.">
        <title>Revised genome sequence of Brucella suis 1330.</title>
        <authorList>
            <person name="Tae H."/>
            <person name="Shallom S."/>
            <person name="Settlage R."/>
            <person name="Preston D."/>
            <person name="Adams L.G."/>
            <person name="Garner H.R."/>
        </authorList>
    </citation>
    <scope>NUCLEOTIDE SEQUENCE [LARGE SCALE GENOMIC DNA]</scope>
    <source>
        <strain>1330</strain>
    </source>
</reference>
<organism>
    <name type="scientific">Brucella suis biovar 1 (strain 1330)</name>
    <dbReference type="NCBI Taxonomy" id="204722"/>
    <lineage>
        <taxon>Bacteria</taxon>
        <taxon>Pseudomonadati</taxon>
        <taxon>Pseudomonadota</taxon>
        <taxon>Alphaproteobacteria</taxon>
        <taxon>Hyphomicrobiales</taxon>
        <taxon>Brucellaceae</taxon>
        <taxon>Brucella/Ochrobactrum group</taxon>
        <taxon>Brucella</taxon>
    </lineage>
</organism>
<protein>
    <recommendedName>
        <fullName evidence="1">Tryptophan synthase beta chain</fullName>
        <ecNumber evidence="1">4.2.1.20</ecNumber>
    </recommendedName>
</protein>
<sequence length="406" mass="43571">MNKPVAPNSYKTGPDEEGMFGIFGGRFVAETLMPLILELQQAYETAKNDPEFKAELNALSTFYAGRPSKLYYAEGLSKHLGGAKIYFKREDLNHTGSHKINNCLGQILLAKRMGKTRIIAETGAGQHGVASATVAARFGLPCIVYMGATDVERQKPNVFRMKLLGAEVKPVSAGNGTLKDAMNEALRDWVTNVEDTYYLIGTAAGPHPYPELVRDFQSVIGTEARQQILEQEGRLPDVIVAAVGGGSNAIGLFHPFLDDASVKIVGVEAGGRGLEGEEHCASMSAGRPGVLHGNRTYLLQNADGQILEGHSVSAGLDYPGVGPEHSWLKDSGRVDYVPILDNEALDAFQLCTRTEGIIPALESAHAIAQAVKMAPTMGKDKVMIVNLSGRGDKDVHTVGKLLGMDI</sequence>
<proteinExistence type="inferred from homology"/>
<gene>
    <name evidence="1" type="primary">trpB</name>
    <name type="ordered locus">BR2110</name>
    <name type="ordered locus">BS1330_I2104</name>
</gene>
<keyword id="KW-0028">Amino-acid biosynthesis</keyword>
<keyword id="KW-0057">Aromatic amino acid biosynthesis</keyword>
<keyword id="KW-0456">Lyase</keyword>
<keyword id="KW-0663">Pyridoxal phosphate</keyword>
<keyword id="KW-0822">Tryptophan biosynthesis</keyword>
<dbReference type="EC" id="4.2.1.20" evidence="1"/>
<dbReference type="EMBL" id="AE014291">
    <property type="protein sequence ID" value="AAN31000.1"/>
    <property type="molecule type" value="Genomic_DNA"/>
</dbReference>
<dbReference type="EMBL" id="CP002997">
    <property type="protein sequence ID" value="AEM19417.1"/>
    <property type="molecule type" value="Genomic_DNA"/>
</dbReference>
<dbReference type="SMR" id="Q8FXY4"/>
<dbReference type="KEGG" id="bms:BR2110"/>
<dbReference type="KEGG" id="bsi:BS1330_I2104"/>
<dbReference type="PATRIC" id="fig|204722.22.peg.1907"/>
<dbReference type="HOGENOM" id="CLU_016734_3_1_5"/>
<dbReference type="UniPathway" id="UPA00035">
    <property type="reaction ID" value="UER00044"/>
</dbReference>
<dbReference type="PRO" id="PR:Q8FXY4"/>
<dbReference type="Proteomes" id="UP000007104">
    <property type="component" value="Chromosome I"/>
</dbReference>
<dbReference type="GO" id="GO:0005737">
    <property type="term" value="C:cytoplasm"/>
    <property type="evidence" value="ECO:0007669"/>
    <property type="project" value="TreeGrafter"/>
</dbReference>
<dbReference type="GO" id="GO:0004834">
    <property type="term" value="F:tryptophan synthase activity"/>
    <property type="evidence" value="ECO:0007669"/>
    <property type="project" value="UniProtKB-UniRule"/>
</dbReference>
<dbReference type="CDD" id="cd06446">
    <property type="entry name" value="Trp-synth_B"/>
    <property type="match status" value="1"/>
</dbReference>
<dbReference type="FunFam" id="3.40.50.1100:FF:000001">
    <property type="entry name" value="Tryptophan synthase beta chain"/>
    <property type="match status" value="1"/>
</dbReference>
<dbReference type="FunFam" id="3.40.50.1100:FF:000004">
    <property type="entry name" value="Tryptophan synthase beta chain"/>
    <property type="match status" value="1"/>
</dbReference>
<dbReference type="Gene3D" id="3.40.50.1100">
    <property type="match status" value="2"/>
</dbReference>
<dbReference type="HAMAP" id="MF_00133">
    <property type="entry name" value="Trp_synth_beta"/>
    <property type="match status" value="1"/>
</dbReference>
<dbReference type="InterPro" id="IPR006653">
    <property type="entry name" value="Trp_synth_b_CS"/>
</dbReference>
<dbReference type="InterPro" id="IPR006654">
    <property type="entry name" value="Trp_synth_beta"/>
</dbReference>
<dbReference type="InterPro" id="IPR023026">
    <property type="entry name" value="Trp_synth_beta/beta-like"/>
</dbReference>
<dbReference type="InterPro" id="IPR001926">
    <property type="entry name" value="TrpB-like_PALP"/>
</dbReference>
<dbReference type="InterPro" id="IPR036052">
    <property type="entry name" value="TrpB-like_PALP_sf"/>
</dbReference>
<dbReference type="NCBIfam" id="TIGR00263">
    <property type="entry name" value="trpB"/>
    <property type="match status" value="1"/>
</dbReference>
<dbReference type="PANTHER" id="PTHR48077:SF3">
    <property type="entry name" value="TRYPTOPHAN SYNTHASE"/>
    <property type="match status" value="1"/>
</dbReference>
<dbReference type="PANTHER" id="PTHR48077">
    <property type="entry name" value="TRYPTOPHAN SYNTHASE-RELATED"/>
    <property type="match status" value="1"/>
</dbReference>
<dbReference type="Pfam" id="PF00291">
    <property type="entry name" value="PALP"/>
    <property type="match status" value="1"/>
</dbReference>
<dbReference type="PIRSF" id="PIRSF001413">
    <property type="entry name" value="Trp_syn_beta"/>
    <property type="match status" value="1"/>
</dbReference>
<dbReference type="SUPFAM" id="SSF53686">
    <property type="entry name" value="Tryptophan synthase beta subunit-like PLP-dependent enzymes"/>
    <property type="match status" value="1"/>
</dbReference>
<dbReference type="PROSITE" id="PS00168">
    <property type="entry name" value="TRP_SYNTHASE_BETA"/>
    <property type="match status" value="1"/>
</dbReference>
<name>TRPB_BRUSU</name>
<evidence type="ECO:0000255" key="1">
    <source>
        <dbReference type="HAMAP-Rule" id="MF_00133"/>
    </source>
</evidence>
<accession>Q8FXY4</accession>
<accession>G0K958</accession>
<comment type="function">
    <text evidence="1">The beta subunit is responsible for the synthesis of L-tryptophan from indole and L-serine.</text>
</comment>
<comment type="catalytic activity">
    <reaction evidence="1">
        <text>(1S,2R)-1-C-(indol-3-yl)glycerol 3-phosphate + L-serine = D-glyceraldehyde 3-phosphate + L-tryptophan + H2O</text>
        <dbReference type="Rhea" id="RHEA:10532"/>
        <dbReference type="ChEBI" id="CHEBI:15377"/>
        <dbReference type="ChEBI" id="CHEBI:33384"/>
        <dbReference type="ChEBI" id="CHEBI:57912"/>
        <dbReference type="ChEBI" id="CHEBI:58866"/>
        <dbReference type="ChEBI" id="CHEBI:59776"/>
        <dbReference type="EC" id="4.2.1.20"/>
    </reaction>
</comment>
<comment type="cofactor">
    <cofactor evidence="1">
        <name>pyridoxal 5'-phosphate</name>
        <dbReference type="ChEBI" id="CHEBI:597326"/>
    </cofactor>
</comment>
<comment type="pathway">
    <text evidence="1">Amino-acid biosynthesis; L-tryptophan biosynthesis; L-tryptophan from chorismate: step 5/5.</text>
</comment>
<comment type="subunit">
    <text evidence="1">Tetramer of two alpha and two beta chains.</text>
</comment>
<comment type="similarity">
    <text evidence="1">Belongs to the TrpB family.</text>
</comment>